<sequence>MINDLKKDSEQRMLKTLESLEQGFAKVRTGRAHPSILNGVMVPYYGSDVPLNQVANVGVEDSRTLIVQPFERTMVAAIDKAIRESDLGLNPITADSIRVPLPALTEETRRDMQKIARSEAENAKVAIRNIRRDVLGDIKALLKEKEISEDDERRAGDDIQKITDKYVAEVDKRLAAKEAELMKV</sequence>
<accession>B0V6F0</accession>
<evidence type="ECO:0000255" key="1">
    <source>
        <dbReference type="HAMAP-Rule" id="MF_00040"/>
    </source>
</evidence>
<comment type="function">
    <text evidence="1">Responsible for the release of ribosomes from messenger RNA at the termination of protein biosynthesis. May increase the efficiency of translation by recycling ribosomes from one round of translation to another.</text>
</comment>
<comment type="subcellular location">
    <subcellularLocation>
        <location evidence="1">Cytoplasm</location>
    </subcellularLocation>
</comment>
<comment type="similarity">
    <text evidence="1">Belongs to the RRF family.</text>
</comment>
<protein>
    <recommendedName>
        <fullName evidence="1">Ribosome-recycling factor</fullName>
        <shortName evidence="1">RRF</shortName>
    </recommendedName>
    <alternativeName>
        <fullName evidence="1">Ribosome-releasing factor</fullName>
    </alternativeName>
</protein>
<reference key="1">
    <citation type="journal article" date="2008" name="PLoS ONE">
        <title>Comparative analysis of Acinetobacters: three genomes for three lifestyles.</title>
        <authorList>
            <person name="Vallenet D."/>
            <person name="Nordmann P."/>
            <person name="Barbe V."/>
            <person name="Poirel L."/>
            <person name="Mangenot S."/>
            <person name="Bataille E."/>
            <person name="Dossat C."/>
            <person name="Gas S."/>
            <person name="Kreimeyer A."/>
            <person name="Lenoble P."/>
            <person name="Oztas S."/>
            <person name="Poulain J."/>
            <person name="Segurens B."/>
            <person name="Robert C."/>
            <person name="Abergel C."/>
            <person name="Claverie J.-M."/>
            <person name="Raoult D."/>
            <person name="Medigue C."/>
            <person name="Weissenbach J."/>
            <person name="Cruveiller S."/>
        </authorList>
    </citation>
    <scope>NUCLEOTIDE SEQUENCE [LARGE SCALE GENOMIC DNA]</scope>
    <source>
        <strain>AYE</strain>
    </source>
</reference>
<gene>
    <name evidence="1" type="primary">frr</name>
    <name type="ordered locus">ABAYE1578</name>
</gene>
<keyword id="KW-0963">Cytoplasm</keyword>
<keyword id="KW-0648">Protein biosynthesis</keyword>
<dbReference type="EMBL" id="CU459141">
    <property type="protein sequence ID" value="CAM86475.1"/>
    <property type="molecule type" value="Genomic_DNA"/>
</dbReference>
<dbReference type="RefSeq" id="WP_000606428.1">
    <property type="nucleotide sequence ID" value="NZ_JBDGFB010000016.1"/>
</dbReference>
<dbReference type="SMR" id="B0V6F0"/>
<dbReference type="EnsemblBacteria" id="CAM86475">
    <property type="protein sequence ID" value="CAM86475"/>
    <property type="gene ID" value="ABAYE1578"/>
</dbReference>
<dbReference type="GeneID" id="92894236"/>
<dbReference type="KEGG" id="aby:ABAYE1578"/>
<dbReference type="HOGENOM" id="CLU_073981_2_1_6"/>
<dbReference type="GO" id="GO:0005829">
    <property type="term" value="C:cytosol"/>
    <property type="evidence" value="ECO:0007669"/>
    <property type="project" value="GOC"/>
</dbReference>
<dbReference type="GO" id="GO:0043023">
    <property type="term" value="F:ribosomal large subunit binding"/>
    <property type="evidence" value="ECO:0007669"/>
    <property type="project" value="TreeGrafter"/>
</dbReference>
<dbReference type="GO" id="GO:0002184">
    <property type="term" value="P:cytoplasmic translational termination"/>
    <property type="evidence" value="ECO:0007669"/>
    <property type="project" value="TreeGrafter"/>
</dbReference>
<dbReference type="CDD" id="cd00520">
    <property type="entry name" value="RRF"/>
    <property type="match status" value="1"/>
</dbReference>
<dbReference type="FunFam" id="1.10.132.20:FF:000001">
    <property type="entry name" value="Ribosome-recycling factor"/>
    <property type="match status" value="1"/>
</dbReference>
<dbReference type="FunFam" id="3.30.1360.40:FF:000001">
    <property type="entry name" value="Ribosome-recycling factor"/>
    <property type="match status" value="1"/>
</dbReference>
<dbReference type="Gene3D" id="3.30.1360.40">
    <property type="match status" value="1"/>
</dbReference>
<dbReference type="Gene3D" id="1.10.132.20">
    <property type="entry name" value="Ribosome-recycling factor"/>
    <property type="match status" value="1"/>
</dbReference>
<dbReference type="HAMAP" id="MF_00040">
    <property type="entry name" value="RRF"/>
    <property type="match status" value="1"/>
</dbReference>
<dbReference type="InterPro" id="IPR002661">
    <property type="entry name" value="Ribosome_recyc_fac"/>
</dbReference>
<dbReference type="InterPro" id="IPR023584">
    <property type="entry name" value="Ribosome_recyc_fac_dom"/>
</dbReference>
<dbReference type="InterPro" id="IPR036191">
    <property type="entry name" value="RRF_sf"/>
</dbReference>
<dbReference type="NCBIfam" id="TIGR00496">
    <property type="entry name" value="frr"/>
    <property type="match status" value="1"/>
</dbReference>
<dbReference type="PANTHER" id="PTHR20982:SF3">
    <property type="entry name" value="MITOCHONDRIAL RIBOSOME RECYCLING FACTOR PSEUDO 1"/>
    <property type="match status" value="1"/>
</dbReference>
<dbReference type="PANTHER" id="PTHR20982">
    <property type="entry name" value="RIBOSOME RECYCLING FACTOR"/>
    <property type="match status" value="1"/>
</dbReference>
<dbReference type="Pfam" id="PF01765">
    <property type="entry name" value="RRF"/>
    <property type="match status" value="1"/>
</dbReference>
<dbReference type="SUPFAM" id="SSF55194">
    <property type="entry name" value="Ribosome recycling factor, RRF"/>
    <property type="match status" value="1"/>
</dbReference>
<name>RRF_ACIBY</name>
<organism>
    <name type="scientific">Acinetobacter baumannii (strain AYE)</name>
    <dbReference type="NCBI Taxonomy" id="509173"/>
    <lineage>
        <taxon>Bacteria</taxon>
        <taxon>Pseudomonadati</taxon>
        <taxon>Pseudomonadota</taxon>
        <taxon>Gammaproteobacteria</taxon>
        <taxon>Moraxellales</taxon>
        <taxon>Moraxellaceae</taxon>
        <taxon>Acinetobacter</taxon>
        <taxon>Acinetobacter calcoaceticus/baumannii complex</taxon>
    </lineage>
</organism>
<proteinExistence type="inferred from homology"/>
<feature type="chain" id="PRO_1000090699" description="Ribosome-recycling factor">
    <location>
        <begin position="1"/>
        <end position="184"/>
    </location>
</feature>